<feature type="chain" id="PRO_1000130827" description="UDP-N-acetylmuramoylalanine--D-glutamate ligase">
    <location>
        <begin position="1"/>
        <end position="450"/>
    </location>
</feature>
<feature type="binding site" evidence="1">
    <location>
        <begin position="119"/>
        <end position="125"/>
    </location>
    <ligand>
        <name>ATP</name>
        <dbReference type="ChEBI" id="CHEBI:30616"/>
    </ligand>
</feature>
<reference key="1">
    <citation type="submission" date="2008-10" db="EMBL/GenBank/DDBJ databases">
        <title>Genome sequence of Bacillus cereus AH187.</title>
        <authorList>
            <person name="Dodson R.J."/>
            <person name="Durkin A.S."/>
            <person name="Rosovitz M.J."/>
            <person name="Rasko D.A."/>
            <person name="Kolsto A.B."/>
            <person name="Okstad O.A."/>
            <person name="Ravel J."/>
            <person name="Sutton G."/>
        </authorList>
    </citation>
    <scope>NUCLEOTIDE SEQUENCE [LARGE SCALE GENOMIC DNA]</scope>
    <source>
        <strain>AH187</strain>
    </source>
</reference>
<comment type="function">
    <text evidence="1">Cell wall formation. Catalyzes the addition of glutamate to the nucleotide precursor UDP-N-acetylmuramoyl-L-alanine (UMA).</text>
</comment>
<comment type="catalytic activity">
    <reaction evidence="1">
        <text>UDP-N-acetyl-alpha-D-muramoyl-L-alanine + D-glutamate + ATP = UDP-N-acetyl-alpha-D-muramoyl-L-alanyl-D-glutamate + ADP + phosphate + H(+)</text>
        <dbReference type="Rhea" id="RHEA:16429"/>
        <dbReference type="ChEBI" id="CHEBI:15378"/>
        <dbReference type="ChEBI" id="CHEBI:29986"/>
        <dbReference type="ChEBI" id="CHEBI:30616"/>
        <dbReference type="ChEBI" id="CHEBI:43474"/>
        <dbReference type="ChEBI" id="CHEBI:83898"/>
        <dbReference type="ChEBI" id="CHEBI:83900"/>
        <dbReference type="ChEBI" id="CHEBI:456216"/>
        <dbReference type="EC" id="6.3.2.9"/>
    </reaction>
</comment>
<comment type="pathway">
    <text evidence="1">Cell wall biogenesis; peptidoglycan biosynthesis.</text>
</comment>
<comment type="subcellular location">
    <subcellularLocation>
        <location evidence="1">Cytoplasm</location>
    </subcellularLocation>
</comment>
<comment type="similarity">
    <text evidence="1">Belongs to the MurCDEF family.</text>
</comment>
<accession>B7HM33</accession>
<gene>
    <name evidence="1" type="primary">murD</name>
    <name type="ordered locus">BCAH187_A3965</name>
</gene>
<sequence>MKTVTEFQNKNILVLGIAKSGYAAATLLQKLGANVIVNDGKPLAENVLAAELQAKGMDVVCGGHPLELLERNISLVVKNPGIPYSNPILVAAKEKQIPIVTEVELAYRISEAPFVGITGSNGKTTTTMLTFEMLKEGQKHPVIAGNIGTVACEVAQDAKENEVVVTELSSFQLMGVELFQPKIAAFLNLFEAHLDYHGTKKEYGLAKANIFKNQTENDYSVINADDADVMALSAYSKGQKVLFSTTKEIEDGACIKDNALYFKGEKVVEVGDIVLPGQHNLENILAAMSIAKLLGVSNKAITAVLKRFTGVKHRLEYVTTINNRKFYNDSKATNMLATEKALSAFTQPTVLLAGGLDRGNEFDDLIPYFKNVKAIVTFGQTAPKLVRAAEKAGLDTIESVDTLDEAVVKAYAHSTDGDVILLSPACASWDQFKTFEERGDIFIQAVHKLI</sequence>
<protein>
    <recommendedName>
        <fullName evidence="1">UDP-N-acetylmuramoylalanine--D-glutamate ligase</fullName>
        <ecNumber evidence="1">6.3.2.9</ecNumber>
    </recommendedName>
    <alternativeName>
        <fullName evidence="1">D-glutamic acid-adding enzyme</fullName>
    </alternativeName>
    <alternativeName>
        <fullName evidence="1">UDP-N-acetylmuramoyl-L-alanyl-D-glutamate synthetase</fullName>
    </alternativeName>
</protein>
<name>MURD_BACC7</name>
<keyword id="KW-0067">ATP-binding</keyword>
<keyword id="KW-0131">Cell cycle</keyword>
<keyword id="KW-0132">Cell division</keyword>
<keyword id="KW-0133">Cell shape</keyword>
<keyword id="KW-0961">Cell wall biogenesis/degradation</keyword>
<keyword id="KW-0963">Cytoplasm</keyword>
<keyword id="KW-0436">Ligase</keyword>
<keyword id="KW-0547">Nucleotide-binding</keyword>
<keyword id="KW-0573">Peptidoglycan synthesis</keyword>
<evidence type="ECO:0000255" key="1">
    <source>
        <dbReference type="HAMAP-Rule" id="MF_00639"/>
    </source>
</evidence>
<dbReference type="EC" id="6.3.2.9" evidence="1"/>
<dbReference type="EMBL" id="CP001177">
    <property type="protein sequence ID" value="ACJ77506.1"/>
    <property type="molecule type" value="Genomic_DNA"/>
</dbReference>
<dbReference type="SMR" id="B7HM33"/>
<dbReference type="KEGG" id="bcr:BCAH187_A3965"/>
<dbReference type="HOGENOM" id="CLU_032540_0_1_9"/>
<dbReference type="UniPathway" id="UPA00219"/>
<dbReference type="Proteomes" id="UP000002214">
    <property type="component" value="Chromosome"/>
</dbReference>
<dbReference type="GO" id="GO:0005737">
    <property type="term" value="C:cytoplasm"/>
    <property type="evidence" value="ECO:0007669"/>
    <property type="project" value="UniProtKB-SubCell"/>
</dbReference>
<dbReference type="GO" id="GO:0005524">
    <property type="term" value="F:ATP binding"/>
    <property type="evidence" value="ECO:0007669"/>
    <property type="project" value="UniProtKB-UniRule"/>
</dbReference>
<dbReference type="GO" id="GO:0008764">
    <property type="term" value="F:UDP-N-acetylmuramoylalanine-D-glutamate ligase activity"/>
    <property type="evidence" value="ECO:0007669"/>
    <property type="project" value="UniProtKB-UniRule"/>
</dbReference>
<dbReference type="GO" id="GO:0051301">
    <property type="term" value="P:cell division"/>
    <property type="evidence" value="ECO:0007669"/>
    <property type="project" value="UniProtKB-KW"/>
</dbReference>
<dbReference type="GO" id="GO:0071555">
    <property type="term" value="P:cell wall organization"/>
    <property type="evidence" value="ECO:0007669"/>
    <property type="project" value="UniProtKB-KW"/>
</dbReference>
<dbReference type="GO" id="GO:0009252">
    <property type="term" value="P:peptidoglycan biosynthetic process"/>
    <property type="evidence" value="ECO:0007669"/>
    <property type="project" value="UniProtKB-UniRule"/>
</dbReference>
<dbReference type="GO" id="GO:0008360">
    <property type="term" value="P:regulation of cell shape"/>
    <property type="evidence" value="ECO:0007669"/>
    <property type="project" value="UniProtKB-KW"/>
</dbReference>
<dbReference type="Gene3D" id="3.90.190.20">
    <property type="entry name" value="Mur ligase, C-terminal domain"/>
    <property type="match status" value="1"/>
</dbReference>
<dbReference type="Gene3D" id="3.40.1190.10">
    <property type="entry name" value="Mur-like, catalytic domain"/>
    <property type="match status" value="1"/>
</dbReference>
<dbReference type="Gene3D" id="3.40.50.720">
    <property type="entry name" value="NAD(P)-binding Rossmann-like Domain"/>
    <property type="match status" value="1"/>
</dbReference>
<dbReference type="HAMAP" id="MF_00639">
    <property type="entry name" value="MurD"/>
    <property type="match status" value="1"/>
</dbReference>
<dbReference type="InterPro" id="IPR036565">
    <property type="entry name" value="Mur-like_cat_sf"/>
</dbReference>
<dbReference type="InterPro" id="IPR004101">
    <property type="entry name" value="Mur_ligase_C"/>
</dbReference>
<dbReference type="InterPro" id="IPR036615">
    <property type="entry name" value="Mur_ligase_C_dom_sf"/>
</dbReference>
<dbReference type="InterPro" id="IPR013221">
    <property type="entry name" value="Mur_ligase_cen"/>
</dbReference>
<dbReference type="InterPro" id="IPR005762">
    <property type="entry name" value="MurD"/>
</dbReference>
<dbReference type="NCBIfam" id="TIGR01087">
    <property type="entry name" value="murD"/>
    <property type="match status" value="1"/>
</dbReference>
<dbReference type="PANTHER" id="PTHR43692">
    <property type="entry name" value="UDP-N-ACETYLMURAMOYLALANINE--D-GLUTAMATE LIGASE"/>
    <property type="match status" value="1"/>
</dbReference>
<dbReference type="PANTHER" id="PTHR43692:SF1">
    <property type="entry name" value="UDP-N-ACETYLMURAMOYLALANINE--D-GLUTAMATE LIGASE"/>
    <property type="match status" value="1"/>
</dbReference>
<dbReference type="Pfam" id="PF02875">
    <property type="entry name" value="Mur_ligase_C"/>
    <property type="match status" value="1"/>
</dbReference>
<dbReference type="Pfam" id="PF08245">
    <property type="entry name" value="Mur_ligase_M"/>
    <property type="match status" value="1"/>
</dbReference>
<dbReference type="Pfam" id="PF21799">
    <property type="entry name" value="MurD-like_N"/>
    <property type="match status" value="1"/>
</dbReference>
<dbReference type="SUPFAM" id="SSF51984">
    <property type="entry name" value="MurCD N-terminal domain"/>
    <property type="match status" value="1"/>
</dbReference>
<dbReference type="SUPFAM" id="SSF53623">
    <property type="entry name" value="MurD-like peptide ligases, catalytic domain"/>
    <property type="match status" value="1"/>
</dbReference>
<dbReference type="SUPFAM" id="SSF53244">
    <property type="entry name" value="MurD-like peptide ligases, peptide-binding domain"/>
    <property type="match status" value="1"/>
</dbReference>
<proteinExistence type="inferred from homology"/>
<organism>
    <name type="scientific">Bacillus cereus (strain AH187)</name>
    <dbReference type="NCBI Taxonomy" id="405534"/>
    <lineage>
        <taxon>Bacteria</taxon>
        <taxon>Bacillati</taxon>
        <taxon>Bacillota</taxon>
        <taxon>Bacilli</taxon>
        <taxon>Bacillales</taxon>
        <taxon>Bacillaceae</taxon>
        <taxon>Bacillus</taxon>
        <taxon>Bacillus cereus group</taxon>
    </lineage>
</organism>